<protein>
    <recommendedName>
        <fullName evidence="18">Outer surface protein C</fullName>
        <shortName evidence="18">pC</shortName>
    </recommendedName>
    <alternativeName>
        <fullName evidence="17">P23</fullName>
    </alternativeName>
</protein>
<proteinExistence type="evidence at protein level"/>
<evidence type="ECO:0000255" key="1">
    <source>
        <dbReference type="PROSITE-ProRule" id="PRU00303"/>
    </source>
</evidence>
<evidence type="ECO:0000269" key="2">
    <source>
    </source>
</evidence>
<evidence type="ECO:0000269" key="3">
    <source>
    </source>
</evidence>
<evidence type="ECO:0000269" key="4">
    <source>
    </source>
</evidence>
<evidence type="ECO:0000269" key="5">
    <source>
    </source>
</evidence>
<evidence type="ECO:0000269" key="6">
    <source>
    </source>
</evidence>
<evidence type="ECO:0000269" key="7">
    <source>
    </source>
</evidence>
<evidence type="ECO:0000269" key="8">
    <source>
    </source>
</evidence>
<evidence type="ECO:0000269" key="9">
    <source>
    </source>
</evidence>
<evidence type="ECO:0000269" key="10">
    <source>
    </source>
</evidence>
<evidence type="ECO:0000269" key="11">
    <source>
    </source>
</evidence>
<evidence type="ECO:0000269" key="12">
    <source>
    </source>
</evidence>
<evidence type="ECO:0000269" key="13">
    <source>
    </source>
</evidence>
<evidence type="ECO:0000269" key="14">
    <source>
    </source>
</evidence>
<evidence type="ECO:0000269" key="15">
    <source>
    </source>
</evidence>
<evidence type="ECO:0000269" key="16">
    <source>
    </source>
</evidence>
<evidence type="ECO:0000303" key="17">
    <source>
    </source>
</evidence>
<evidence type="ECO:0000303" key="18">
    <source>
    </source>
</evidence>
<evidence type="ECO:0000305" key="19"/>
<evidence type="ECO:0000305" key="20">
    <source>
    </source>
</evidence>
<evidence type="ECO:0000305" key="21">
    <source>
    </source>
</evidence>
<evidence type="ECO:0000312" key="22">
    <source>
        <dbReference type="EMBL" id="AAA16058.1"/>
    </source>
</evidence>
<evidence type="ECO:0000312" key="23">
    <source>
        <dbReference type="EMBL" id="AAB36995.1"/>
    </source>
</evidence>
<evidence type="ECO:0000312" key="24">
    <source>
        <dbReference type="EMBL" id="AAC66329.1"/>
    </source>
</evidence>
<evidence type="ECO:0000312" key="25">
    <source>
        <dbReference type="EMBL" id="BAA08457.1"/>
    </source>
</evidence>
<evidence type="ECO:0000312" key="26">
    <source>
        <dbReference type="EMBL" id="CAA49306.1"/>
    </source>
</evidence>
<evidence type="ECO:0000312" key="27">
    <source>
        <dbReference type="EMBL" id="X69589"/>
    </source>
</evidence>
<evidence type="ECO:0000312" key="28">
    <source>
        <dbReference type="PDB" id="1GGQ"/>
    </source>
</evidence>
<evidence type="ECO:0007829" key="29">
    <source>
        <dbReference type="PDB" id="1GGQ"/>
    </source>
</evidence>
<accession>Q07337</accession>
<accession>Q9S3P3</accession>
<feature type="signal peptide" evidence="1">
    <location>
        <begin position="1"/>
        <end position="18"/>
    </location>
</feature>
<feature type="chain" id="PRO_0000018083" description="Outer surface protein C">
    <location>
        <begin position="19"/>
        <end position="210"/>
    </location>
</feature>
<feature type="lipid moiety-binding region" description="N-palmitoyl cysteine" evidence="1">
    <location>
        <position position="19"/>
    </location>
</feature>
<feature type="lipid moiety-binding region" description="S-diacylglycerol cysteine" evidence="1">
    <location>
        <position position="19"/>
    </location>
</feature>
<feature type="sequence variant" description="In strain: 2591." evidence="14">
    <original>D</original>
    <variation>E</variation>
    <location>
        <position position="51"/>
    </location>
</feature>
<feature type="sequence variant" description="In strain: 2591." evidence="14">
    <original>L</original>
    <variation>V</variation>
    <location>
        <position position="56"/>
    </location>
</feature>
<feature type="sequence variant" description="In strain: 2591." evidence="14">
    <original>ALLS</original>
    <variation>TLLA</variation>
    <location>
        <begin position="64"/>
        <end position="67"/>
    </location>
</feature>
<feature type="sequence variant" description="In strain: 2591." evidence="14">
    <original>IAAKAIGKKIHQNNGLDTENNH</original>
    <variation>VAKKAIGNLIAQNGLNAGANQ</variation>
    <location>
        <begin position="72"/>
        <end position="93"/>
    </location>
</feature>
<feature type="sequence variant" description="In strain: 2591." evidence="14">
    <original>A</original>
    <variation>V</variation>
    <location>
        <position position="103"/>
    </location>
</feature>
<feature type="sequence variant" description="In strain: 2591." evidence="14">
    <original>KQ</original>
    <variation>AE</variation>
    <location>
        <begin position="109"/>
        <end position="110"/>
    </location>
</feature>
<feature type="sequence variant" description="In strain: 2591." evidence="14">
    <original>EG</original>
    <variation>SEE</variation>
    <location>
        <begin position="118"/>
        <end position="119"/>
    </location>
</feature>
<feature type="sequence variant" description="In strain: 2591." evidence="14">
    <original>DA</original>
    <variation>ED</variation>
    <location>
        <begin position="125"/>
        <end position="126"/>
    </location>
</feature>
<feature type="sequence variant" description="In strain: 2591." evidence="14">
    <original>SET</original>
    <variation>NKA</variation>
    <location>
        <begin position="131"/>
        <end position="133"/>
    </location>
</feature>
<feature type="sequence variant" description="In strain: 2591." evidence="14">
    <original>N</original>
    <variation>D</variation>
    <location>
        <position position="136"/>
    </location>
</feature>
<feature type="sequence variant" description="In strain: 2591." evidence="14">
    <original>EKHTD</original>
    <variation>SSHAE</variation>
    <location>
        <begin position="140"/>
        <end position="144"/>
    </location>
</feature>
<feature type="sequence variant" description="In strain: 2591." evidence="14">
    <original>KEGV</original>
    <variation>IANGAA</variation>
    <location>
        <begin position="147"/>
        <end position="150"/>
    </location>
</feature>
<feature type="sequence variant" description="In strain: 2591." evidence="14">
    <original>DAKE</original>
    <variation>NAKA</variation>
    <location>
        <begin position="154"/>
        <end position="157"/>
    </location>
</feature>
<feature type="sequence variant" description="In strain: 2591." evidence="14">
    <original>T</original>
    <variation>D</variation>
    <location>
        <position position="167"/>
    </location>
</feature>
<feature type="sequence variant" description="In strain: 2591." evidence="14">
    <original>EELG</original>
    <variation>QELE</variation>
    <location>
        <begin position="171"/>
        <end position="174"/>
    </location>
</feature>
<feature type="sequence variant" description="In strain: 2591." evidence="14">
    <original>EV</original>
    <variation>KN</variation>
    <location>
        <begin position="181"/>
        <end position="182"/>
    </location>
</feature>
<feature type="sequence variant" description="In strain: 2591." evidence="14">
    <original>KEMLA</original>
    <variation>QETLN</variation>
    <location>
        <begin position="188"/>
        <end position="192"/>
    </location>
</feature>
<feature type="sequence variant" description="In strain: 2591." evidence="14">
    <original>S</original>
    <variation>N</variation>
    <location>
        <position position="206"/>
    </location>
</feature>
<feature type="mutagenesis site" description="Wild-type virulence in mice, no antibody response in mice, decreased heart colonization-." evidence="7">
    <original>K</original>
    <variation>Y</variation>
    <location>
        <position position="60"/>
    </location>
</feature>
<feature type="mutagenesis site" description="Bacteria are non-infectious in mice, no antibody response in mice, increased affinity for human plasminogen." evidence="7">
    <original>EVE</original>
    <variation>QVQ</variation>
    <location>
        <begin position="61"/>
        <end position="63"/>
    </location>
</feature>
<feature type="mutagenesis site" description="Bacteria are non-infectious in mice, no antibody response in mice." evidence="7">
    <original>E</original>
    <variation>Q</variation>
    <location>
        <position position="61"/>
    </location>
</feature>
<feature type="mutagenesis site" description="Wild-type virulence in mice, no antibody response in mice, colonizes organs like wild-type." evidence="7">
    <original>E</original>
    <variation>Q</variation>
    <location>
        <position position="63"/>
    </location>
</feature>
<feature type="helix" evidence="29">
    <location>
        <begin position="42"/>
        <end position="75"/>
    </location>
</feature>
<feature type="turn" evidence="29">
    <location>
        <begin position="76"/>
        <end position="78"/>
    </location>
</feature>
<feature type="strand" evidence="29">
    <location>
        <begin position="79"/>
        <end position="82"/>
    </location>
</feature>
<feature type="turn" evidence="29">
    <location>
        <begin position="83"/>
        <end position="85"/>
    </location>
</feature>
<feature type="strand" evidence="29">
    <location>
        <begin position="86"/>
        <end position="89"/>
    </location>
</feature>
<feature type="helix" evidence="29">
    <location>
        <begin position="95"/>
        <end position="113"/>
    </location>
</feature>
<feature type="turn" evidence="29">
    <location>
        <begin position="118"/>
        <end position="120"/>
    </location>
</feature>
<feature type="helix" evidence="29">
    <location>
        <begin position="121"/>
        <end position="140"/>
    </location>
</feature>
<feature type="helix" evidence="29">
    <location>
        <begin position="142"/>
        <end position="145"/>
    </location>
</feature>
<feature type="strand" evidence="29">
    <location>
        <begin position="146"/>
        <end position="148"/>
    </location>
</feature>
<feature type="helix" evidence="29">
    <location>
        <begin position="152"/>
        <end position="159"/>
    </location>
</feature>
<feature type="turn" evidence="29">
    <location>
        <begin position="167"/>
        <end position="169"/>
    </location>
</feature>
<feature type="helix" evidence="29">
    <location>
        <begin position="170"/>
        <end position="195"/>
    </location>
</feature>
<feature type="helix" evidence="29">
    <location>
        <begin position="196"/>
        <end position="199"/>
    </location>
</feature>
<gene>
    <name evidence="18" type="primary">ospC</name>
    <name type="ordered locus">BB_B19</name>
</gene>
<comment type="function">
    <text evidence="4 5 6 7 8 9 11 13 14 15 20 21">A major immunodominant protein in mammalian hosts (PubMed:8098841, PubMed:8225587, PubMed:8478109). Required for the initial stages of mammalian infection (PubMed:14970347, PubMed:16714588, PubMed:20199597, PubMed:28873507). Interaction with tick I.ricinus salivary protein Salp15 protects the bacteria from antibody-mediated killing in vitro and in vivo (PubMed:18752445). Inhibits macrophage-mediated phagocytosis of the bacteria (PubMed:26438793). Binds human plasminogen; this probably confers an extracellular protease activity on the bacteria that allows it to traverse tissue (PubMed:20199597, PubMed:22433849). Binds human complement C4-B, which may inhibit the complement cascade (Probable) (PubMed:28873507). Experiments in mice suggest it may play another role after initial infection (Probable) (PubMed:27611840).</text>
</comment>
<comment type="subunit">
    <text evidence="2 6 7 8 11">Homodimer (PubMed:11230121, PubMed:20199597). Binds human plasminogen on the bacterial surface, also binds human plasmin (PubMed:20199597, PubMed:22433849). Interacts with tick I.ricinus salivary protein Iric-1 (PubMed:18752445). Interacts with human complement C4 beta chain (C4B); whole bacteria bind to wells coated with C4b. Binding is inhibited by human complement factor C2 (PubMed:28873507).</text>
</comment>
<comment type="subcellular location">
    <subcellularLocation>
        <location>Cell outer membrane</location>
        <topology>Lipid-anchor</topology>
    </subcellularLocation>
    <subcellularLocation>
        <location evidence="7 8 11 14">Cell surface</location>
    </subcellularLocation>
    <text evidence="8">Expressed in a punctate fashion on a subset of cells in vitro.</text>
</comment>
<comment type="induction">
    <text evidence="3 4 10 12">Expressed variably in vitro in strain B31; detected in immunocompetent infected mice at 10 days post-infection but not after 17 days (PubMed:11854355). Not expressed in the tick midgut of unfed ticks, expressed in tick midgut following feeding on mice (at protein level). The change in expression is at least partially due to a temperature shift, expressed in vitro at 37 but not 24 degrees Celsius (at protein level) (PubMed:7708747). More highly expressed at pH 7.0 than pH 8.0 in vitro (at protein level) (PubMed:14970347). Transcripts are most abundant 7 days post-infection in infected mice, but continue to be expressed for at least 21 days. They are found at varying levels in the tissues tested (heart, inguinal lymph node, bladder, tibiotarsal joint and skin at the injection site) where they vary over the course of the experiment (PubMed:27611840).</text>
</comment>
<comment type="disruption phenotype">
    <text evidence="4 5 7 8 9 11">No observable effect on growth in vitro, infects ticks normally, required to infect mice. No change in ability to colonize the tick midgut, no change in bacterial migration to the tick salivary gland (PubMed:14970347, PubMed:16714588). Loss of infectivity in mice, including SCID and NOSCIDg mice (deficient in T and B cells, functional natural killer (NK) cells which also lack complement C5) (PubMed:20199597, PubMed:26438793). About 40-70% more uptake by murine peritoneal macrophages and human macrophages (B.burgdorferi strains B31 and 297 deleted); no change in uptake by neutrophils (PubMed:26438793). Whole bacteria no longer interact with human plasminogen (PubMed:22433849). Only about 12% of bacteria survive in mouse bloodstream longer than 30 minutes post-inoculation, decreased bacterial binding to C4b in vitro (PubMed:28873507).</text>
</comment>
<comment type="miscellaneous">
    <text evidence="19">The causative agent of Lyme disease, the bacteria has an enzootic lifestyle. Larval ticks are infected with bacteria during feeding on infected hosts (mostly mammals) which retain the bacteria during subsequent developmental stages. It is transmitted to the next host when it is bitten by ticks. During tick feeding (which can last for several days), bacterial migrate from the tick midgut to the salivary gland where they are transmitted to the host.</text>
</comment>
<comment type="miscellaneous">
    <text evidence="10">Expression of the mRNA for this protein in infected mice occurs in different tissues (including host heart, bladder and joints far from the initial injection site) at different levels for at least 21 days post-infection, suggesting it may play another role after initial infection.</text>
</comment>
<comment type="similarity">
    <text evidence="19">Belongs to the OspC lipoprotein family.</text>
</comment>
<geneLocation type="plasmid" evidence="15 16">
    <name>cp26</name>
</geneLocation>
<keyword id="KW-0002">3D-structure</keyword>
<keyword id="KW-0998">Cell outer membrane</keyword>
<keyword id="KW-0449">Lipoprotein</keyword>
<keyword id="KW-0472">Membrane</keyword>
<keyword id="KW-0564">Palmitate</keyword>
<keyword id="KW-0614">Plasmid</keyword>
<keyword id="KW-1185">Reference proteome</keyword>
<keyword id="KW-0732">Signal</keyword>
<keyword id="KW-0843">Virulence</keyword>
<organism>
    <name type="scientific">Borreliella burgdorferi (strain ATCC 35210 / DSM 4680 / CIP 102532 / B31)</name>
    <name type="common">Borrelia burgdorferi</name>
    <dbReference type="NCBI Taxonomy" id="224326"/>
    <lineage>
        <taxon>Bacteria</taxon>
        <taxon>Pseudomonadati</taxon>
        <taxon>Spirochaetota</taxon>
        <taxon>Spirochaetia</taxon>
        <taxon>Spirochaetales</taxon>
        <taxon>Borreliaceae</taxon>
        <taxon>Borreliella</taxon>
    </lineage>
</organism>
<name>OSPC_BORBU</name>
<dbReference type="EMBL" id="X69596">
    <property type="protein sequence ID" value="CAA49306.1"/>
    <property type="molecule type" value="Genomic_DNA"/>
</dbReference>
<dbReference type="EMBL" id="U01894">
    <property type="protein sequence ID" value="AAA16058.1"/>
    <property type="molecule type" value="Unassigned_DNA"/>
</dbReference>
<dbReference type="EMBL" id="X69589">
    <property type="status" value="NOT_ANNOTATED_CDS"/>
    <property type="molecule type" value="Genomic_DNA"/>
</dbReference>
<dbReference type="EMBL" id="D49497">
    <property type="protein sequence ID" value="BAA08457.1"/>
    <property type="molecule type" value="Genomic_DNA"/>
</dbReference>
<dbReference type="EMBL" id="AE000792">
    <property type="protein sequence ID" value="AAC66329.1"/>
    <property type="molecule type" value="Genomic_DNA"/>
</dbReference>
<dbReference type="EMBL" id="L42887">
    <property type="protein sequence ID" value="AAB36995.1"/>
    <property type="molecule type" value="Genomic_DNA"/>
</dbReference>
<dbReference type="PIR" id="G70218">
    <property type="entry name" value="G70218"/>
</dbReference>
<dbReference type="PIR" id="S69927">
    <property type="entry name" value="S69927"/>
</dbReference>
<dbReference type="RefSeq" id="NP_047005.1">
    <property type="nucleotide sequence ID" value="NC_001903.1"/>
</dbReference>
<dbReference type="RefSeq" id="WP_010890595.1">
    <property type="nucleotide sequence ID" value="NC_001903.1"/>
</dbReference>
<dbReference type="PDB" id="1GGQ">
    <property type="method" value="X-ray"/>
    <property type="resolution" value="2.51 A"/>
    <property type="chains" value="A/B/C/D=39-200"/>
</dbReference>
<dbReference type="PDB" id="7UIJ">
    <property type="method" value="X-ray"/>
    <property type="resolution" value="2.70 A"/>
    <property type="chains" value="C/D=38-201"/>
</dbReference>
<dbReference type="PDB" id="9BIF">
    <property type="method" value="X-ray"/>
    <property type="resolution" value="3.09 A"/>
    <property type="chains" value="A/B/E/F/M/N/S/T=38-201"/>
</dbReference>
<dbReference type="PDBsum" id="1GGQ"/>
<dbReference type="PDBsum" id="7UIJ"/>
<dbReference type="PDBsum" id="9BIF"/>
<dbReference type="BMRB" id="Q07337"/>
<dbReference type="SMR" id="Q07337"/>
<dbReference type="EnsemblBacteria" id="AAC66329">
    <property type="protein sequence ID" value="AAC66329"/>
    <property type="gene ID" value="BB_B19"/>
</dbReference>
<dbReference type="KEGG" id="bbu:BB_B19"/>
<dbReference type="PATRIC" id="fig|224326.49.peg.1608"/>
<dbReference type="HOGENOM" id="CLU_089887_0_0_12"/>
<dbReference type="OrthoDB" id="352157at2"/>
<dbReference type="EvolutionaryTrace" id="Q07337"/>
<dbReference type="Proteomes" id="UP000001807">
    <property type="component" value="Plasmid cp26"/>
</dbReference>
<dbReference type="GO" id="GO:0009986">
    <property type="term" value="C:cell surface"/>
    <property type="evidence" value="ECO:0007669"/>
    <property type="project" value="UniProtKB-SubCell"/>
</dbReference>
<dbReference type="GO" id="GO:0031240">
    <property type="term" value="C:external side of cell outer membrane"/>
    <property type="evidence" value="ECO:0000314"/>
    <property type="project" value="CAFA"/>
</dbReference>
<dbReference type="GO" id="GO:0016020">
    <property type="term" value="C:membrane"/>
    <property type="evidence" value="ECO:0000314"/>
    <property type="project" value="CAFA"/>
</dbReference>
<dbReference type="Gene3D" id="1.20.120.240">
    <property type="entry name" value="Lipoprotein, type 6"/>
    <property type="match status" value="1"/>
</dbReference>
<dbReference type="InterPro" id="IPR001800">
    <property type="entry name" value="Lipoprotein_OspC"/>
</dbReference>
<dbReference type="InterPro" id="IPR036437">
    <property type="entry name" value="OspC-like_sf"/>
</dbReference>
<dbReference type="Pfam" id="PF01441">
    <property type="entry name" value="Lipoprotein_6"/>
    <property type="match status" value="1"/>
</dbReference>
<dbReference type="SUPFAM" id="SSF63515">
    <property type="entry name" value="Outer surface protein C (OspC)"/>
    <property type="match status" value="1"/>
</dbReference>
<dbReference type="PROSITE" id="PS51257">
    <property type="entry name" value="PROKAR_LIPOPROTEIN"/>
    <property type="match status" value="1"/>
</dbReference>
<sequence>MKKNTLSAILMTLFLFISCNNSGKDGNTSANSADESVKGPNLTEISKKITDSNAVLLAVKEVEALLSSIDEIAAKAIGKKIHQNNGLDTENNHNGSLLAGAYAISTLIKQKLDGLKNEGLKEKIDAAKKCSETFTNKLKEKHTDLGKEGVTDADAKEAILKTNGTKTKGAEELGKLFESVEVLSKAAKEMLANSVKELTSPVVAESPKKP</sequence>
<reference evidence="26" key="1">
    <citation type="journal article" date="1993" name="Med. Microbiol. Immunol.">
        <title>Genetic heterogenity of the genes coding for the outer surface protein C (OspC) and the flagellin of Borrelia burgdorferi.</title>
        <authorList>
            <person name="Jauris-Heipke S."/>
            <person name="Fuchs R."/>
            <person name="Motz M."/>
            <person name="Preac-Mursic V."/>
            <person name="Schwab E."/>
            <person name="Will G."/>
            <person name="Wilske B."/>
        </authorList>
    </citation>
    <scope>NUCLEOTIDE SEQUENCE [GENOMIC DNA]</scope>
    <scope>IMMUNOGENIC IN MAN</scope>
    <source>
        <strain>ATCC 35210 / DSM 4680 / CIP 102532 / B31</strain>
    </source>
</reference>
<reference key="2">
    <citation type="journal article" date="1993" name="Infect. Immun.">
        <title>Immunological and molecular polymorphisms of OspC, an immunodominant major outer surface protein of Borrelia burgdorferi.</title>
        <authorList>
            <person name="Wilske B."/>
            <person name="Preace-Mursic V."/>
            <person name="Jauris S."/>
            <person name="Pradel I."/>
            <person name="Soutschek E."/>
            <person name="Schwab E."/>
            <person name="Wanner G."/>
        </authorList>
    </citation>
    <scope>NUCLEOTIDE SEQUENCE [GENOMIC DNA]</scope>
    <source>
        <strain>ATCC 35210 / DSM 4680 / CIP 102532 / B31</strain>
    </source>
</reference>
<reference evidence="22" key="3">
    <citation type="journal article" date="1993" name="Infect. Immun.">
        <title>Molecular characterization and expression of p23 (OspC) from a North American strain of Borrelia burgdorferi.</title>
        <authorList>
            <person name="Padula S.J."/>
            <person name="Sampieri A."/>
            <person name="Dias F."/>
            <person name="Szczepanski A."/>
            <person name="Ryan R.W."/>
        </authorList>
    </citation>
    <scope>NUCLEOTIDE SEQUENCE [GENOMIC DNA]</scope>
    <scope>SUBCELLULAR LOCATION</scope>
    <scope>IMMUNOGENIC IN MAN</scope>
    <source>
        <strain>2591</strain>
        <strain>ATCC 35210 / DSM 4680 / CIP 102532 / B31</strain>
    </source>
</reference>
<reference evidence="27" key="4">
    <citation type="journal article" date="1995" name="J. Clin. Microbiol.">
        <title>Molecular analysis of genes encoding outer surface protein C (OspC) of Borrelia burgdorferi sensu lato: relationship to ospA genotype and evidence of lateral gene exchange of ospC.</title>
        <authorList>
            <person name="Jauris-Heipke S."/>
            <person name="Liegl G."/>
            <person name="Preac-Mursic V."/>
            <person name="Roessler D."/>
            <person name="Schwab E."/>
            <person name="Soutschek E."/>
            <person name="Will G."/>
            <person name="Wilske B."/>
        </authorList>
    </citation>
    <scope>NUCLEOTIDE SEQUENCE [GENOMIC DNA]</scope>
    <source>
        <strain>PKa</strain>
    </source>
</reference>
<reference evidence="25" key="5">
    <citation type="journal article" date="1995" name="J. Clin. Microbiol.">
        <title>Outer surface protein C gene sequence analysis of Borrelia burgdorferi sensu lato isolates from Japan.</title>
        <authorList>
            <person name="Fukunaga M."/>
            <person name="Hamase A."/>
        </authorList>
    </citation>
    <scope>NUCLEOTIDE SEQUENCE [GENOMIC DNA]</scope>
    <source>
        <strain>ATCC 35210 / DSM 4680 / CIP 102532 / B31</strain>
    </source>
</reference>
<reference evidence="24" key="6">
    <citation type="journal article" date="1997" name="Nature">
        <title>Genomic sequence of a Lyme disease spirochaete, Borrelia burgdorferi.</title>
        <authorList>
            <person name="Fraser C.M."/>
            <person name="Casjens S."/>
            <person name="Huang W.M."/>
            <person name="Sutton G.G."/>
            <person name="Clayton R.A."/>
            <person name="Lathigra R."/>
            <person name="White O."/>
            <person name="Ketchum K.A."/>
            <person name="Dodson R.J."/>
            <person name="Hickey E.K."/>
            <person name="Gwinn M.L."/>
            <person name="Dougherty B.A."/>
            <person name="Tomb J.-F."/>
            <person name="Fleischmann R.D."/>
            <person name="Richardson D.L."/>
            <person name="Peterson J.D."/>
            <person name="Kerlavage A.R."/>
            <person name="Quackenbush J."/>
            <person name="Salzberg S.L."/>
            <person name="Hanson M."/>
            <person name="van Vugt R."/>
            <person name="Palmer N."/>
            <person name="Adams M.D."/>
            <person name="Gocayne J.D."/>
            <person name="Weidman J.F."/>
            <person name="Utterback T.R."/>
            <person name="Watthey L."/>
            <person name="McDonald L.A."/>
            <person name="Artiach P."/>
            <person name="Bowman C."/>
            <person name="Garland S.A."/>
            <person name="Fujii C."/>
            <person name="Cotton M.D."/>
            <person name="Horst K."/>
            <person name="Roberts K.M."/>
            <person name="Hatch B."/>
            <person name="Smith H.O."/>
            <person name="Venter J.C."/>
        </authorList>
    </citation>
    <scope>NUCLEOTIDE SEQUENCE [LARGE SCALE GENOMIC DNA]</scope>
    <source>
        <strain>ATCC 35210 / DSM 4680 / CIP 102532 / B31</strain>
        <plasmid>cp26</plasmid>
    </source>
</reference>
<reference evidence="23" key="7">
    <citation type="journal article" date="1995" name="Mol. Microbiol.">
        <title>Evidence for lateral transfer and recombination in OspC variation in Lyme disease Borrelia.</title>
        <authorList>
            <person name="Livey I."/>
            <person name="Gibbs C.P."/>
            <person name="Schuster R."/>
            <person name="Dorner F."/>
        </authorList>
    </citation>
    <scope>NUCLEOTIDE SEQUENCE [GENOMIC DNA] OF 19-210</scope>
    <source>
        <strain>Ip2</strain>
    </source>
</reference>
<reference key="8">
    <citation type="journal article" date="1993" name="Infect. Immun.">
        <title>The cryptic ospC gene of Borrelia burgdorferi B31 is located on a circular plasmid.</title>
        <authorList>
            <person name="Sadziene A."/>
            <person name="Wilske B."/>
            <person name="Ferdows M.S."/>
            <person name="Barbour A.G."/>
        </authorList>
    </citation>
    <scope>ENCODED ON PLASMID CP26</scope>
    <source>
        <strain>ATCC 35210 / DSM 4680 / CIP 102532 / B31</strain>
        <plasmid>cp26</plasmid>
    </source>
</reference>
<reference key="9">
    <citation type="journal article" date="1995" name="Proc. Natl. Acad. Sci. U.S.A.">
        <title>Induction of an outer surface protein on Borrelia burgdorferi during tick feeding.</title>
        <authorList>
            <person name="Schwan T.G."/>
            <person name="Piesman J."/>
            <person name="Golde W.T."/>
            <person name="Dolan M.C."/>
            <person name="Rosa P.A."/>
        </authorList>
    </citation>
    <scope>INDUCTION</scope>
    <source>
        <strain>ATCC 35210 / DSM 4680 / CIP 102532 / B31</strain>
        <strain>JD1</strain>
    </source>
</reference>
<reference key="10">
    <citation type="journal article" date="2002" name="J. Exp. Med.">
        <title>An immune evasion mechanism for spirochetal persistence in Lyme borreliosis.</title>
        <authorList>
            <person name="Liang F.T."/>
            <person name="Jacobs M.B."/>
            <person name="Bowers L.C."/>
            <person name="Philipp M.T."/>
        </authorList>
    </citation>
    <scope>INDCTION IN INFECTED MICE</scope>
    <source>
        <strain>ATCC 35210 / DSM 4680 / CIP 102532 / B31</strain>
    </source>
</reference>
<reference key="11">
    <citation type="journal article" date="2004" name="Proc. Natl. Acad. Sci. U.S.A.">
        <title>Outer-surface protein C of the Lyme disease spirochete: a protein induced in ticks for infection of mammals.</title>
        <authorList>
            <person name="Grimm D."/>
            <person name="Tilly K."/>
            <person name="Byram R."/>
            <person name="Stewart P.E."/>
            <person name="Krum J.G."/>
            <person name="Bueschel D.M."/>
            <person name="Schwan T.G."/>
            <person name="Policastro P.F."/>
            <person name="Elias A.F."/>
            <person name="Rosa P.A."/>
        </authorList>
    </citation>
    <scope>FUNCTION</scope>
    <scope>INDUCTION</scope>
    <scope>DISRUPTION PHENOTYPE</scope>
    <source>
        <strain>ATCC 35210 / DSM 4680 / CIP 102532 / B31</strain>
        <plasmid>cp26</plasmid>
    </source>
</reference>
<reference key="12">
    <citation type="journal article" date="2006" name="Infect. Immun.">
        <title>Borrelia burgdorferi OspC protein required exclusively in a crucial early stage of mammalian infection.</title>
        <authorList>
            <person name="Tilly K."/>
            <person name="Krum J.G."/>
            <person name="Bestor A."/>
            <person name="Jewett M.W."/>
            <person name="Grimm D."/>
            <person name="Bueschel D."/>
            <person name="Byram R."/>
            <person name="Dorward D."/>
            <person name="Vanraden M.J."/>
            <person name="Stewart P."/>
            <person name="Rosa P."/>
        </authorList>
    </citation>
    <scope>FUNCTION</scope>
    <scope>DISRUPTION PHENOTYPE</scope>
    <source>
        <strain>ATCC 35210 / DSM 4680 / CIP 102532 / B31</strain>
        <plasmid>cp26</plasmid>
    </source>
</reference>
<reference key="13">
    <citation type="journal article" date="2008" name="J. Infect. Dis.">
        <title>Preferential protection of Borrelia burgdorferi sensu stricto by a Salp15 homologue in Ixodes ricinus saliva.</title>
        <authorList>
            <person name="Hovius J.W."/>
            <person name="Schuijt T.J."/>
            <person name="de Groot K.A."/>
            <person name="Roelofs J.J."/>
            <person name="Oei G.A."/>
            <person name="Marquart J.A."/>
            <person name="de Beer R."/>
            <person name="van 't Veer C."/>
            <person name="van der Poll T."/>
            <person name="Ramamoorthi N."/>
            <person name="Fikrig E."/>
            <person name="van Dam A.P."/>
        </authorList>
    </citation>
    <scope>INTERACTION WITH I.RICINUS IRIC-1</scope>
    <scope>PROTECTS AGAINST MAMMALIAN IMMUNE SYSTEM</scope>
    <source>
        <strain>ATCC 35210 / DSM 4680 / CIP 102532 / B31</strain>
    </source>
</reference>
<reference key="14">
    <citation type="journal article" date="2010" name="Mol. Microbiol.">
        <title>Identification of residues within ligand-binding domain 1 (LBD1) of the Borrelia burgdorferi OspC protein required for function in the mammalian environment.</title>
        <authorList>
            <person name="Earnhart C.G."/>
            <person name="Leblanc D.V."/>
            <person name="Alix K.E."/>
            <person name="Desrosiers D.C."/>
            <person name="Radolf J.D."/>
            <person name="Marconi R.T."/>
        </authorList>
    </citation>
    <scope>FUNCTION</scope>
    <scope>SUBUNIT</scope>
    <scope>INTERACTION WITH HUMAN PLASMINOGEN</scope>
    <scope>SUBCELLULAR LOCATION</scope>
    <scope>DISRUPTION PHENOTYPE</scope>
    <scope>MUTAGENESIS OF LYS-60; 61-GLU--GLU-63; GLU-61 AND GLU-63</scope>
    <source>
        <strain>B31-5A4</strain>
        <plasmid>cp26</plasmid>
    </source>
</reference>
<reference key="15">
    <citation type="journal article" date="2012" name="J. Biol. Chem.">
        <title>OspC is potent plasminogen receptor on surface of Borrelia burgdorferi.</title>
        <authorList>
            <person name="Oender O."/>
            <person name="Humphrey P.T."/>
            <person name="McOmber B."/>
            <person name="Korobova F."/>
            <person name="Francella N."/>
            <person name="Greenbaum D.C."/>
            <person name="Brisson D."/>
        </authorList>
    </citation>
    <scope>FUNCTION AS A PLASMINOGEN RECEPTOR</scope>
    <scope>SUBCELLULAR LOCATION</scope>
    <scope>DISRUPTION PHENOTYPE</scope>
    <source>
        <strain>ATCC 35210 / DSM 4680 / CIP 102532 / B31</strain>
    </source>
</reference>
<reference key="16">
    <citation type="journal article" date="2015" name="Infect. Immun.">
        <title>Outer surface protein OspC is an antiphagocytic factor that protects Borrelia burgdorferi from phagocytosis by macrophages.</title>
        <authorList>
            <person name="Carrasco S.E."/>
            <person name="Troxell B."/>
            <person name="Yang Y."/>
            <person name="Brandt S.L."/>
            <person name="Li H."/>
            <person name="Sandusky G.E."/>
            <person name="Condon K.W."/>
            <person name="Serezani C.H."/>
            <person name="Yang X.F."/>
        </authorList>
    </citation>
    <scope>FUNCTION IN INHIBITING PHAGOCYTOSIS BY HOST MACROPHAGES</scope>
    <scope>DISRUPTION PHENOTYPE</scope>
    <source>
        <strain>297</strain>
        <strain>ATCC 35210 / DSM 4680 / CIP 102532 / B31</strain>
    </source>
</reference>
<reference key="17">
    <citation type="journal article" date="2016" name="PLoS ONE">
        <title>In Vivo Imaging Demonstrates That Borrelia burgdorferi ospC Is Uniquely Expressed Temporally and Spatially throughout Experimental Infection.</title>
        <authorList>
            <person name="Skare J.T."/>
            <person name="Shaw D.K."/>
            <person name="Trzeciakowski J.P."/>
            <person name="Hyde J.A."/>
        </authorList>
    </citation>
    <scope>FUNCTION</scope>
    <scope>INDUCTION</scope>
    <source>
        <strain>ATCC 35210 / DSM 4680 / CIP 102532 / B31 / ML23</strain>
    </source>
</reference>
<reference key="18">
    <citation type="journal article" date="2017" name="Cell. Microbiol.">
        <title>Borrelia burgdorferi outer surface protein C (OspC) binds complement component C4b and confers bloodstream survival.</title>
        <authorList>
            <person name="Caine J.A."/>
            <person name="Lin Y.P."/>
            <person name="Kessler J.R."/>
            <person name="Sato H."/>
            <person name="Leong J.M."/>
            <person name="Coburn J."/>
        </authorList>
    </citation>
    <scope>FUNCTION</scope>
    <scope>INTERACTION WITH HUMAN C4B</scope>
    <scope>SUBCELLULAR LOCATION</scope>
    <scope>DISRUPTION PHENOTYPE</scope>
    <source>
        <strain>ATCC 35210 / DSM 4680 / CIP 102532 / B31</strain>
    </source>
</reference>
<reference key="19">
    <citation type="journal article" date="2021" name="Cell. Microbiol.">
        <title>Corrigendum.</title>
        <authorList>
            <person name="Caine J.A."/>
            <person name="Lin Y.P."/>
            <person name="Kessler J.R."/>
            <person name="Sato H."/>
            <person name="Leong J.M."/>
            <person name="Coburn J."/>
        </authorList>
    </citation>
    <scope>ERRATUM OF PUBMED:28873507</scope>
</reference>
<reference evidence="28" key="20">
    <citation type="journal article" date="2001" name="EMBO J.">
        <title>Crystal structure of outer surface protein C (OspC) from the Lyme disease spirochete, Borrelia burgdorferi.</title>
        <authorList>
            <person name="Kumaran D."/>
            <person name="Eswaramoorthy S."/>
            <person name="Luft B.J."/>
            <person name="Koide S."/>
            <person name="Dunn J.J."/>
            <person name="Lawson C.L."/>
            <person name="Swaminathan S."/>
        </authorList>
    </citation>
    <scope>X-RAY CRYSTALLOGRAPHY (2.50 ANGSTROMS) OF 44-200</scope>
    <scope>SUBUNIT</scope>
    <source>
        <strain>ATCC 35210 / DSM 4680 / CIP 102532 / B31</strain>
    </source>
</reference>